<reference key="1">
    <citation type="journal article" date="2009" name="PLoS ONE">
        <title>Genome degradation in Brucella ovis corresponds with narrowing of its host range and tissue tropism.</title>
        <authorList>
            <person name="Tsolis R.M."/>
            <person name="Seshadri R."/>
            <person name="Santos R.L."/>
            <person name="Sangari F.J."/>
            <person name="Lobo J.M."/>
            <person name="de Jong M.F."/>
            <person name="Ren Q."/>
            <person name="Myers G."/>
            <person name="Brinkac L.M."/>
            <person name="Nelson W.C."/>
            <person name="Deboy R.T."/>
            <person name="Angiuoli S."/>
            <person name="Khouri H."/>
            <person name="Dimitrov G."/>
            <person name="Robinson J.R."/>
            <person name="Mulligan S."/>
            <person name="Walker R.L."/>
            <person name="Elzer P.E."/>
            <person name="Hassan K.A."/>
            <person name="Paulsen I.T."/>
        </authorList>
    </citation>
    <scope>NUCLEOTIDE SEQUENCE [LARGE SCALE GENOMIC DNA]</scope>
    <source>
        <strain>ATCC 25840 / 63/290 / NCTC 10512</strain>
    </source>
</reference>
<sequence>MKANIHPDYHTIKVVMTDGTEYMTRSTWGKEGDTMNLDIDPTTHPAWTGGSQTLLDRGGRVTKFKNRFGNLGI</sequence>
<organism>
    <name type="scientific">Brucella ovis (strain ATCC 25840 / 63/290 / NCTC 10512)</name>
    <dbReference type="NCBI Taxonomy" id="444178"/>
    <lineage>
        <taxon>Bacteria</taxon>
        <taxon>Pseudomonadati</taxon>
        <taxon>Pseudomonadota</taxon>
        <taxon>Alphaproteobacteria</taxon>
        <taxon>Hyphomicrobiales</taxon>
        <taxon>Brucellaceae</taxon>
        <taxon>Brucella/Ochrobactrum group</taxon>
        <taxon>Brucella</taxon>
    </lineage>
</organism>
<accession>A5VS71</accession>
<proteinExistence type="inferred from homology"/>
<protein>
    <recommendedName>
        <fullName evidence="1">Large ribosomal subunit protein bL31</fullName>
    </recommendedName>
    <alternativeName>
        <fullName evidence="2">50S ribosomal protein L31</fullName>
    </alternativeName>
</protein>
<evidence type="ECO:0000255" key="1">
    <source>
        <dbReference type="HAMAP-Rule" id="MF_00501"/>
    </source>
</evidence>
<evidence type="ECO:0000305" key="2"/>
<gene>
    <name evidence="1" type="primary">rpmE</name>
    <name type="ordered locus">BOV_1659</name>
</gene>
<feature type="chain" id="PRO_1000126573" description="Large ribosomal subunit protein bL31">
    <location>
        <begin position="1"/>
        <end position="73"/>
    </location>
</feature>
<name>RL31_BRUO2</name>
<keyword id="KW-0687">Ribonucleoprotein</keyword>
<keyword id="KW-0689">Ribosomal protein</keyword>
<keyword id="KW-0694">RNA-binding</keyword>
<keyword id="KW-0699">rRNA-binding</keyword>
<dbReference type="EMBL" id="CP000708">
    <property type="protein sequence ID" value="ABQ60525.1"/>
    <property type="molecule type" value="Genomic_DNA"/>
</dbReference>
<dbReference type="RefSeq" id="WP_002964804.1">
    <property type="nucleotide sequence ID" value="NC_009505.1"/>
</dbReference>
<dbReference type="SMR" id="A5VS71"/>
<dbReference type="GeneID" id="97533132"/>
<dbReference type="KEGG" id="bov:BOV_1659"/>
<dbReference type="HOGENOM" id="CLU_114306_3_2_5"/>
<dbReference type="Proteomes" id="UP000006383">
    <property type="component" value="Chromosome I"/>
</dbReference>
<dbReference type="GO" id="GO:1990904">
    <property type="term" value="C:ribonucleoprotein complex"/>
    <property type="evidence" value="ECO:0007669"/>
    <property type="project" value="UniProtKB-KW"/>
</dbReference>
<dbReference type="GO" id="GO:0005840">
    <property type="term" value="C:ribosome"/>
    <property type="evidence" value="ECO:0007669"/>
    <property type="project" value="UniProtKB-KW"/>
</dbReference>
<dbReference type="GO" id="GO:0019843">
    <property type="term" value="F:rRNA binding"/>
    <property type="evidence" value="ECO:0007669"/>
    <property type="project" value="UniProtKB-KW"/>
</dbReference>
<dbReference type="GO" id="GO:0003735">
    <property type="term" value="F:structural constituent of ribosome"/>
    <property type="evidence" value="ECO:0007669"/>
    <property type="project" value="InterPro"/>
</dbReference>
<dbReference type="GO" id="GO:0006412">
    <property type="term" value="P:translation"/>
    <property type="evidence" value="ECO:0007669"/>
    <property type="project" value="UniProtKB-UniRule"/>
</dbReference>
<dbReference type="Gene3D" id="4.10.830.30">
    <property type="entry name" value="Ribosomal protein L31"/>
    <property type="match status" value="1"/>
</dbReference>
<dbReference type="HAMAP" id="MF_00501">
    <property type="entry name" value="Ribosomal_bL31_1"/>
    <property type="match status" value="1"/>
</dbReference>
<dbReference type="InterPro" id="IPR034704">
    <property type="entry name" value="Ribosomal_bL28/bL31-like_sf"/>
</dbReference>
<dbReference type="InterPro" id="IPR002150">
    <property type="entry name" value="Ribosomal_bL31"/>
</dbReference>
<dbReference type="InterPro" id="IPR027491">
    <property type="entry name" value="Ribosomal_bL31_A"/>
</dbReference>
<dbReference type="InterPro" id="IPR042105">
    <property type="entry name" value="Ribosomal_bL31_sf"/>
</dbReference>
<dbReference type="NCBIfam" id="TIGR00105">
    <property type="entry name" value="L31"/>
    <property type="match status" value="1"/>
</dbReference>
<dbReference type="NCBIfam" id="NF001809">
    <property type="entry name" value="PRK00528.1"/>
    <property type="match status" value="1"/>
</dbReference>
<dbReference type="PANTHER" id="PTHR33280">
    <property type="entry name" value="50S RIBOSOMAL PROTEIN L31, CHLOROPLASTIC"/>
    <property type="match status" value="1"/>
</dbReference>
<dbReference type="PANTHER" id="PTHR33280:SF6">
    <property type="entry name" value="LARGE RIBOSOMAL SUBUNIT PROTEIN BL31A"/>
    <property type="match status" value="1"/>
</dbReference>
<dbReference type="Pfam" id="PF01197">
    <property type="entry name" value="Ribosomal_L31"/>
    <property type="match status" value="1"/>
</dbReference>
<dbReference type="PRINTS" id="PR01249">
    <property type="entry name" value="RIBOSOMALL31"/>
</dbReference>
<dbReference type="SUPFAM" id="SSF143800">
    <property type="entry name" value="L28p-like"/>
    <property type="match status" value="1"/>
</dbReference>
<dbReference type="PROSITE" id="PS01143">
    <property type="entry name" value="RIBOSOMAL_L31"/>
    <property type="match status" value="1"/>
</dbReference>
<comment type="function">
    <text evidence="1">Binds the 23S rRNA.</text>
</comment>
<comment type="subunit">
    <text evidence="1">Part of the 50S ribosomal subunit.</text>
</comment>
<comment type="similarity">
    <text evidence="1">Belongs to the bacterial ribosomal protein bL31 family. Type A subfamily.</text>
</comment>